<accession>Q05357</accession>
<name>KAS2_STRHA</name>
<reference key="1">
    <citation type="journal article" date="1993" name="Gene">
        <title>Hybridization and DNA sequence analyses suggest an early evolutionary divergence of related biosynthetic gene sets encoding polyketide antibiotics and spore pigments in Streptomyces spp.</title>
        <authorList>
            <person name="Blanco G."/>
            <person name="Brian P."/>
            <person name="Pereda A."/>
            <person name="Mendez C."/>
            <person name="Salas J.A."/>
            <person name="Chater K.F."/>
        </authorList>
    </citation>
    <scope>NUCLEOTIDE SEQUENCE [GENOMIC DNA]</scope>
    <source>
        <strain>NRRL 2381</strain>
    </source>
</reference>
<keyword id="KW-0012">Acyltransferase</keyword>
<keyword id="KW-0808">Transferase</keyword>
<feature type="chain" id="PRO_0000180346" description="Putative polyketide beta-ketoacyl synthase 2">
    <location>
        <begin position="1"/>
        <end position="414"/>
    </location>
</feature>
<feature type="domain" description="Ketosynthase family 3 (KS3)" evidence="1">
    <location>
        <begin position="4"/>
        <end position="407"/>
    </location>
</feature>
<gene>
    <name type="primary">sch2</name>
</gene>
<dbReference type="EC" id="2.3.1.-"/>
<dbReference type="EMBL" id="L05390">
    <property type="protein sequence ID" value="AAA02834.1"/>
    <property type="molecule type" value="Genomic_DNA"/>
</dbReference>
<dbReference type="PIR" id="JN0826">
    <property type="entry name" value="JN0826"/>
</dbReference>
<dbReference type="SMR" id="Q05357"/>
<dbReference type="GO" id="GO:0004315">
    <property type="term" value="F:3-oxoacyl-[acyl-carrier-protein] synthase activity"/>
    <property type="evidence" value="ECO:0007669"/>
    <property type="project" value="TreeGrafter"/>
</dbReference>
<dbReference type="GO" id="GO:0006633">
    <property type="term" value="P:fatty acid biosynthetic process"/>
    <property type="evidence" value="ECO:0007669"/>
    <property type="project" value="TreeGrafter"/>
</dbReference>
<dbReference type="FunFam" id="3.40.47.10:FF:000089">
    <property type="entry name" value="Putative polyketide beta-ketoacyl synthase 2"/>
    <property type="match status" value="1"/>
</dbReference>
<dbReference type="Gene3D" id="3.40.47.10">
    <property type="match status" value="2"/>
</dbReference>
<dbReference type="InterPro" id="IPR000794">
    <property type="entry name" value="Beta-ketoacyl_synthase"/>
</dbReference>
<dbReference type="InterPro" id="IPR014031">
    <property type="entry name" value="Ketoacyl_synth_C"/>
</dbReference>
<dbReference type="InterPro" id="IPR014030">
    <property type="entry name" value="Ketoacyl_synth_N"/>
</dbReference>
<dbReference type="InterPro" id="IPR020841">
    <property type="entry name" value="PKS_Beta-ketoAc_synthase_dom"/>
</dbReference>
<dbReference type="InterPro" id="IPR016039">
    <property type="entry name" value="Thiolase-like"/>
</dbReference>
<dbReference type="PANTHER" id="PTHR11712:SF322">
    <property type="entry name" value="POLYKETIDE BETA-KETOACYL SYNTHASE 2-RELATED"/>
    <property type="match status" value="1"/>
</dbReference>
<dbReference type="PANTHER" id="PTHR11712">
    <property type="entry name" value="POLYKETIDE SYNTHASE-RELATED"/>
    <property type="match status" value="1"/>
</dbReference>
<dbReference type="Pfam" id="PF00109">
    <property type="entry name" value="ketoacyl-synt"/>
    <property type="match status" value="1"/>
</dbReference>
<dbReference type="Pfam" id="PF02801">
    <property type="entry name" value="Ketoacyl-synt_C"/>
    <property type="match status" value="1"/>
</dbReference>
<dbReference type="SMART" id="SM00825">
    <property type="entry name" value="PKS_KS"/>
    <property type="match status" value="1"/>
</dbReference>
<dbReference type="SUPFAM" id="SSF53901">
    <property type="entry name" value="Thiolase-like"/>
    <property type="match status" value="2"/>
</dbReference>
<dbReference type="PROSITE" id="PS52004">
    <property type="entry name" value="KS3_2"/>
    <property type="match status" value="1"/>
</dbReference>
<protein>
    <recommendedName>
        <fullName>Putative polyketide beta-ketoacyl synthase 2</fullName>
        <shortName>KS</shortName>
        <ecNumber>2.3.1.-</ecNumber>
    </recommendedName>
    <alternativeName>
        <fullName>Polyketide condensing enzyme</fullName>
    </alternativeName>
</protein>
<sequence>MSAPRRAVVTGLGVVAPHGIGAETFWKTAVDGTSSLARIDREGCGHLPLKIAGQVPDFDPAALIEDTYLVQTDRFTHFAMAATQLALDDARLSRADIDSPYSVGVVTAAGSGGGEFGQRELQKLWGQGSKYVGPYQSIAWFYAASTGQISIRGGFKGPCGVVAADEAGGLDALAHAALAVRRGTATVVAGATEAPLAPYSMVCQLGYPELSRSADPGRAYRPFTSAACGFVPAEGGAMFVLEEEGAARERGADARATVAGHAATFTGASRWEESRAGLAHAIGTALARAGCRPQDVDVVFADALGVPEADRAEALALADALGPHARRVPVTAPKAGIGRAFCAAAVLDVATALLAMEHELIPPTPHVLDVCHDLDLVVGRARPARPRTALVLSRGLMGNNSALVLRRGAAPFPE</sequence>
<evidence type="ECO:0000255" key="1">
    <source>
        <dbReference type="PROSITE-ProRule" id="PRU01348"/>
    </source>
</evidence>
<evidence type="ECO:0000305" key="2"/>
<comment type="function">
    <text>Involved in developmentally regulated synthesis of a compound biosynthetically related to polyketide antibiotics which is essential for spore color in Streptomyces halstedii.</text>
</comment>
<comment type="miscellaneous">
    <text>This putative ketoacyl synthase lacks the active site cysteine.</text>
</comment>
<comment type="similarity">
    <text evidence="2">Belongs to the thiolase-like superfamily. Beta-ketoacyl-ACP synthases family.</text>
</comment>
<organism>
    <name type="scientific">Streptomyces halstedii</name>
    <dbReference type="NCBI Taxonomy" id="1944"/>
    <lineage>
        <taxon>Bacteria</taxon>
        <taxon>Bacillati</taxon>
        <taxon>Actinomycetota</taxon>
        <taxon>Actinomycetes</taxon>
        <taxon>Kitasatosporales</taxon>
        <taxon>Streptomycetaceae</taxon>
        <taxon>Streptomyces</taxon>
    </lineage>
</organism>
<proteinExistence type="inferred from homology"/>